<organism>
    <name type="scientific">Acinetobacter pittii (strain PHEA-2)</name>
    <dbReference type="NCBI Taxonomy" id="871585"/>
    <lineage>
        <taxon>Bacteria</taxon>
        <taxon>Pseudomonadati</taxon>
        <taxon>Pseudomonadota</taxon>
        <taxon>Gammaproteobacteria</taxon>
        <taxon>Moraxellales</taxon>
        <taxon>Moraxellaceae</taxon>
        <taxon>Acinetobacter</taxon>
        <taxon>Acinetobacter calcoaceticus/baumannii complex</taxon>
    </lineage>
</organism>
<accession>Q7WTJ6</accession>
<accession>F0KIC2</accession>
<keyword id="KW-0058">Aromatic hydrocarbons catabolism</keyword>
<keyword id="KW-0903">Direct protein sequencing</keyword>
<keyword id="KW-0503">Monooxygenase</keyword>
<keyword id="KW-0520">NAD</keyword>
<keyword id="KW-0560">Oxidoreductase</keyword>
<keyword id="KW-1185">Reference proteome</keyword>
<reference evidence="4" key="1">
    <citation type="journal article" date="2003" name="Curr. Microbiol.">
        <title>Genetic organization of genes encoding phenol hydroxylase, benzoate 1,2-dioxygenase alpha subunit and its regulatory proteins in Acinetobacter calcoaceticus PHEA-2.</title>
        <authorList>
            <person name="Xu Y."/>
            <person name="Chen M."/>
            <person name="Zhang W."/>
            <person name="Lin M."/>
        </authorList>
    </citation>
    <scope>NUCLEOTIDE SEQUENCE [GENOMIC DNA]</scope>
    <source>
        <strain evidence="4">PHEA-2</strain>
    </source>
</reference>
<reference key="2">
    <citation type="journal article" date="2011" name="J. Bacteriol.">
        <title>Genome sequence of Acinetobacter calcoaceticus PHEA-2, isolated from industry wastewater.</title>
        <authorList>
            <person name="Zhan Y."/>
            <person name="Yan Y."/>
            <person name="Zhang W."/>
            <person name="Yu H."/>
            <person name="Chen M."/>
            <person name="Lu W."/>
            <person name="Ping S."/>
            <person name="Peng Z."/>
            <person name="Yuan M."/>
            <person name="Zhou Z."/>
            <person name="Elmerich C."/>
            <person name="Lin M."/>
        </authorList>
    </citation>
    <scope>NUCLEOTIDE SEQUENCE [LARGE SCALE GENOMIC DNA]</scope>
    <source>
        <strain>PHEA-2</strain>
    </source>
</reference>
<reference evidence="3" key="3">
    <citation type="journal article" date="2004" name="Eng. Life Sci.">
        <title>Growth on phenol at chemostress levels amplifies the expression of the phenol degradation pathway in Acinetobacter calcoaceticus.</title>
        <authorList>
            <person name="Benndorf D."/>
            <person name="Loffhagen N."/>
            <person name="Hartig C."/>
            <person name="Babel W."/>
        </authorList>
    </citation>
    <scope>PROTEIN SEQUENCE OF 2-16</scope>
    <source>
        <strain>69-V</strain>
    </source>
</reference>
<feature type="initiator methionine" description="Removed" evidence="2">
    <location>
        <position position="1"/>
    </location>
</feature>
<feature type="chain" id="PRO_0000079941" description="Phenol 2-monooxygenase, oxygenase component MhpL">
    <location>
        <begin position="2"/>
        <end position="332"/>
    </location>
</feature>
<dbReference type="EC" id="1.14.13.244" evidence="1"/>
<dbReference type="EMBL" id="AJ564846">
    <property type="protein sequence ID" value="CAD92312.1"/>
    <property type="molecule type" value="Genomic_DNA"/>
</dbReference>
<dbReference type="EMBL" id="CP002177">
    <property type="protein sequence ID" value="ADY81060.1"/>
    <property type="molecule type" value="Genomic_DNA"/>
</dbReference>
<dbReference type="RefSeq" id="WP_014206218.1">
    <property type="nucleotide sequence ID" value="NC_016603.1"/>
</dbReference>
<dbReference type="RefSeq" id="YP_004994742.1">
    <property type="nucleotide sequence ID" value="NC_016603.1"/>
</dbReference>
<dbReference type="SMR" id="Q7WTJ6"/>
<dbReference type="STRING" id="871585.BDGL_000474"/>
<dbReference type="GeneID" id="11638652"/>
<dbReference type="KEGG" id="acc:BDGL_000474"/>
<dbReference type="PATRIC" id="fig|871585.3.peg.471"/>
<dbReference type="eggNOG" id="ENOG502Z7Z9">
    <property type="taxonomic scope" value="Bacteria"/>
</dbReference>
<dbReference type="HOGENOM" id="CLU_833678_0_0_6"/>
<dbReference type="OrthoDB" id="9806768at2"/>
<dbReference type="UniPathway" id="UPA00728"/>
<dbReference type="Proteomes" id="UP000007477">
    <property type="component" value="Chromosome"/>
</dbReference>
<dbReference type="GO" id="GO:0018662">
    <property type="term" value="F:phenol 2-monooxygenase activity"/>
    <property type="evidence" value="ECO:0000250"/>
    <property type="project" value="UniProtKB"/>
</dbReference>
<dbReference type="GO" id="GO:0046191">
    <property type="term" value="P:aerobic phenol-containing compound catabolic process"/>
    <property type="evidence" value="ECO:0000250"/>
    <property type="project" value="UniProtKB"/>
</dbReference>
<dbReference type="CDD" id="cd01058">
    <property type="entry name" value="AAMH_B"/>
    <property type="match status" value="1"/>
</dbReference>
<dbReference type="FunFam" id="1.10.620.20:FF:000022">
    <property type="entry name" value="Phenol hydroxylase component"/>
    <property type="match status" value="1"/>
</dbReference>
<dbReference type="Gene3D" id="1.10.620.20">
    <property type="entry name" value="Ribonucleotide Reductase, subunit A"/>
    <property type="match status" value="1"/>
</dbReference>
<dbReference type="InterPro" id="IPR009078">
    <property type="entry name" value="Ferritin-like_SF"/>
</dbReference>
<dbReference type="InterPro" id="IPR012078">
    <property type="entry name" value="MP_mOase_hydro"/>
</dbReference>
<dbReference type="InterPro" id="IPR003430">
    <property type="entry name" value="Phenol_Hydrox"/>
</dbReference>
<dbReference type="InterPro" id="IPR012348">
    <property type="entry name" value="RNR-like"/>
</dbReference>
<dbReference type="Pfam" id="PF02332">
    <property type="entry name" value="Phenol_Hydrox"/>
    <property type="match status" value="1"/>
</dbReference>
<dbReference type="PIRSF" id="PIRSF000040">
    <property type="entry name" value="MMOH_comp"/>
    <property type="match status" value="1"/>
</dbReference>
<dbReference type="SUPFAM" id="SSF47240">
    <property type="entry name" value="Ferritin-like"/>
    <property type="match status" value="1"/>
</dbReference>
<gene>
    <name type="primary">mphL</name>
    <name type="ordered locus">BDGL_000474</name>
</gene>
<evidence type="ECO:0000250" key="1">
    <source>
        <dbReference type="UniProtKB" id="P19730"/>
    </source>
</evidence>
<evidence type="ECO:0000269" key="2">
    <source ref="3"/>
</evidence>
<evidence type="ECO:0000305" key="3"/>
<evidence type="ECO:0000312" key="4">
    <source>
        <dbReference type="EMBL" id="CAD92312.1"/>
    </source>
</evidence>
<name>DMPL_ACIP2</name>
<comment type="function">
    <text evidence="1">Part of a multicomponent enzyme which catalyzes the degradation of phenol and some of its methylated derivatives.</text>
</comment>
<comment type="catalytic activity">
    <reaction evidence="1">
        <text>phenol + NADH + O2 + H(+) = catechol + NAD(+) + H2O</text>
        <dbReference type="Rhea" id="RHEA:57952"/>
        <dbReference type="ChEBI" id="CHEBI:15377"/>
        <dbReference type="ChEBI" id="CHEBI:15378"/>
        <dbReference type="ChEBI" id="CHEBI:15379"/>
        <dbReference type="ChEBI" id="CHEBI:15882"/>
        <dbReference type="ChEBI" id="CHEBI:18135"/>
        <dbReference type="ChEBI" id="CHEBI:57540"/>
        <dbReference type="ChEBI" id="CHEBI:57945"/>
        <dbReference type="EC" id="1.14.13.244"/>
    </reaction>
    <physiologicalReaction direction="left-to-right" evidence="1">
        <dbReference type="Rhea" id="RHEA:57953"/>
    </physiologicalReaction>
</comment>
<comment type="pathway">
    <text evidence="1">Aromatic compound metabolism; phenol degradation.</text>
</comment>
<comment type="induction">
    <text evidence="3">By phenol.</text>
</comment>
<comment type="similarity">
    <text evidence="3">Belongs to the TmoE/XamoE family.</text>
</comment>
<sequence>MTLEIKTSNVEPIRQNYAYIERRFGSKPATRYQEVSFDVQAETNFHYRPLWKPEKTLNDKTHTALQMQDWYAFKDPRQFYYGTYVQHRARLQDTAESNFAFFEKRQLAEHLSNEVKAKVIECLLPFRHVEQTANLHMMSGSAYGYGTVLTQACIYAAMDHLGIAQYISRIGLALDGNSGDSLQQAKQAWMQHPAWQGLRRLCEESLTEQDYFKLFLLQNLVIDGFVTELVYQQFDQWLVSQNARDLAMLTEFMKDTLGDLRKWSDTVIKTAAAESDHNKQLLNEWFTESLAQVKAAFTPWATAALTVDAVDQAEQAVIERAKKLGLQPLTNA</sequence>
<proteinExistence type="evidence at protein level"/>
<protein>
    <recommendedName>
        <fullName evidence="3">Phenol 2-monooxygenase, oxygenase component MhpL</fullName>
        <ecNumber evidence="1">1.14.13.244</ecNumber>
    </recommendedName>
    <alternativeName>
        <fullName>Phenol 2-monooxygenase P1 component</fullName>
    </alternativeName>
    <alternativeName>
        <fullName>Phenol hydroxylase P1 protein</fullName>
    </alternativeName>
</protein>